<comment type="function">
    <text evidence="1">One of the primary rRNA binding proteins, this protein initially binds near the 5'-end of the 23S rRNA. It is important during the early stages of 50S assembly. It makes multiple contacts with different domains of the 23S rRNA in the assembled 50S subunit and ribosome.</text>
</comment>
<comment type="function">
    <text evidence="1">Forms part of the polypeptide exit tunnel.</text>
</comment>
<comment type="subunit">
    <text evidence="1">Part of the 50S ribosomal subunit.</text>
</comment>
<comment type="similarity">
    <text evidence="1">Belongs to the universal ribosomal protein uL4 family.</text>
</comment>
<dbReference type="EMBL" id="CP001612">
    <property type="protein sequence ID" value="ACP53766.1"/>
    <property type="molecule type" value="Genomic_DNA"/>
</dbReference>
<dbReference type="RefSeq" id="WP_012719919.1">
    <property type="nucleotide sequence ID" value="NC_012633.1"/>
</dbReference>
<dbReference type="SMR" id="C3PPA6"/>
<dbReference type="KEGG" id="raf:RAF_ORF0911"/>
<dbReference type="HOGENOM" id="CLU_041575_5_1_5"/>
<dbReference type="Proteomes" id="UP000002305">
    <property type="component" value="Chromosome"/>
</dbReference>
<dbReference type="GO" id="GO:1990904">
    <property type="term" value="C:ribonucleoprotein complex"/>
    <property type="evidence" value="ECO:0007669"/>
    <property type="project" value="UniProtKB-KW"/>
</dbReference>
<dbReference type="GO" id="GO:0005840">
    <property type="term" value="C:ribosome"/>
    <property type="evidence" value="ECO:0007669"/>
    <property type="project" value="UniProtKB-KW"/>
</dbReference>
<dbReference type="GO" id="GO:0019843">
    <property type="term" value="F:rRNA binding"/>
    <property type="evidence" value="ECO:0007669"/>
    <property type="project" value="UniProtKB-UniRule"/>
</dbReference>
<dbReference type="GO" id="GO:0003735">
    <property type="term" value="F:structural constituent of ribosome"/>
    <property type="evidence" value="ECO:0007669"/>
    <property type="project" value="InterPro"/>
</dbReference>
<dbReference type="GO" id="GO:0006412">
    <property type="term" value="P:translation"/>
    <property type="evidence" value="ECO:0007669"/>
    <property type="project" value="UniProtKB-UniRule"/>
</dbReference>
<dbReference type="FunFam" id="3.40.1370.10:FF:000015">
    <property type="entry name" value="50S ribosomal protein L4"/>
    <property type="match status" value="1"/>
</dbReference>
<dbReference type="Gene3D" id="3.40.1370.10">
    <property type="match status" value="1"/>
</dbReference>
<dbReference type="HAMAP" id="MF_01328_B">
    <property type="entry name" value="Ribosomal_uL4_B"/>
    <property type="match status" value="1"/>
</dbReference>
<dbReference type="InterPro" id="IPR002136">
    <property type="entry name" value="Ribosomal_uL4"/>
</dbReference>
<dbReference type="InterPro" id="IPR013005">
    <property type="entry name" value="Ribosomal_uL4-like"/>
</dbReference>
<dbReference type="InterPro" id="IPR023574">
    <property type="entry name" value="Ribosomal_uL4_dom_sf"/>
</dbReference>
<dbReference type="NCBIfam" id="TIGR03953">
    <property type="entry name" value="rplD_bact"/>
    <property type="match status" value="1"/>
</dbReference>
<dbReference type="PANTHER" id="PTHR10746">
    <property type="entry name" value="50S RIBOSOMAL PROTEIN L4"/>
    <property type="match status" value="1"/>
</dbReference>
<dbReference type="PANTHER" id="PTHR10746:SF6">
    <property type="entry name" value="LARGE RIBOSOMAL SUBUNIT PROTEIN UL4M"/>
    <property type="match status" value="1"/>
</dbReference>
<dbReference type="Pfam" id="PF00573">
    <property type="entry name" value="Ribosomal_L4"/>
    <property type="match status" value="1"/>
</dbReference>
<dbReference type="SUPFAM" id="SSF52166">
    <property type="entry name" value="Ribosomal protein L4"/>
    <property type="match status" value="1"/>
</dbReference>
<organism>
    <name type="scientific">Rickettsia africae (strain ESF-5)</name>
    <dbReference type="NCBI Taxonomy" id="347255"/>
    <lineage>
        <taxon>Bacteria</taxon>
        <taxon>Pseudomonadati</taxon>
        <taxon>Pseudomonadota</taxon>
        <taxon>Alphaproteobacteria</taxon>
        <taxon>Rickettsiales</taxon>
        <taxon>Rickettsiaceae</taxon>
        <taxon>Rickettsieae</taxon>
        <taxon>Rickettsia</taxon>
        <taxon>spotted fever group</taxon>
    </lineage>
</organism>
<name>RL4_RICAE</name>
<keyword id="KW-0687">Ribonucleoprotein</keyword>
<keyword id="KW-0689">Ribosomal protein</keyword>
<keyword id="KW-0694">RNA-binding</keyword>
<keyword id="KW-0699">rRNA-binding</keyword>
<protein>
    <recommendedName>
        <fullName evidence="1">Large ribosomal subunit protein uL4</fullName>
    </recommendedName>
    <alternativeName>
        <fullName evidence="2">50S ribosomal protein L4</fullName>
    </alternativeName>
</protein>
<proteinExistence type="inferred from homology"/>
<gene>
    <name evidence="1" type="primary">rplD</name>
    <name type="ordered locus">RAF_ORF0911</name>
</gene>
<reference key="1">
    <citation type="journal article" date="2009" name="BMC Genomics">
        <title>Analysis of the Rickettsia africae genome reveals that virulence acquisition in Rickettsia species may be explained by genome reduction.</title>
        <authorList>
            <person name="Fournier P.-E."/>
            <person name="El Karkouri K."/>
            <person name="Leroy Q."/>
            <person name="Robert C."/>
            <person name="Giumelli B."/>
            <person name="Renesto P."/>
            <person name="Socolovschi C."/>
            <person name="Parola P."/>
            <person name="Audic S."/>
            <person name="Raoult D."/>
        </authorList>
    </citation>
    <scope>NUCLEOTIDE SEQUENCE [LARGE SCALE GENOMIC DNA]</scope>
    <source>
        <strain>ESF-5</strain>
    </source>
</reference>
<evidence type="ECO:0000255" key="1">
    <source>
        <dbReference type="HAMAP-Rule" id="MF_01328"/>
    </source>
</evidence>
<evidence type="ECO:0000305" key="2"/>
<accession>C3PPA6</accession>
<sequence length="207" mass="23009">MKTKIFSLANEEVGEISLNEDIFAVEFIRDDIIKQVIDWQRAKAMSGNHKTKTVSEVLGTTKKPFKQKGTGNARQGSLRSVQMRGGGVAHGPRVRSHATKLPKKVRKLGLIHALSEKCAEGKLLVIDSLKLDKPKTSALVNILNKFQGKSFFVIDGNEVDINFSLAAKNIYNTVIVPQIGANVYDIIRHEYVLLSQEAVSVLEERLR</sequence>
<feature type="chain" id="PRO_1000214581" description="Large ribosomal subunit protein uL4">
    <location>
        <begin position="1"/>
        <end position="207"/>
    </location>
</feature>